<feature type="chain" id="PRO_0000068439" description="Regulatory protein rop">
    <location>
        <begin position="1"/>
        <end position="63"/>
    </location>
</feature>
<feature type="helix" evidence="1">
    <location>
        <begin position="3"/>
        <end position="28"/>
    </location>
</feature>
<feature type="helix" evidence="1">
    <location>
        <begin position="32"/>
        <end position="56"/>
    </location>
</feature>
<accession>P03051</accession>
<name>ROP_ECOLX</name>
<sequence length="63" mass="7228">MTKQEKTALNMARFIRSQTLTLLEKLNELDADEQADICESLHDHADELYRSCLARFGDDGENL</sequence>
<keyword id="KW-0002">3D-structure</keyword>
<keyword id="KW-0614">Plasmid</keyword>
<keyword id="KW-0804">Transcription</keyword>
<keyword id="KW-0805">Transcription regulation</keyword>
<proteinExistence type="evidence at protein level"/>
<dbReference type="EMBL" id="J01749">
    <property type="protein sequence ID" value="AAB59736.1"/>
    <property type="molecule type" value="Genomic_DNA"/>
</dbReference>
<dbReference type="EMBL" id="J01564">
    <property type="protein sequence ID" value="AAA87380.1"/>
    <property type="molecule type" value="Genomic_DNA"/>
</dbReference>
<dbReference type="PIR" id="A03587">
    <property type="entry name" value="RGECRE"/>
</dbReference>
<dbReference type="RefSeq" id="NP_040367.1">
    <property type="nucleotide sequence ID" value="NC_001371.1"/>
</dbReference>
<dbReference type="RefSeq" id="NP_863575.1">
    <property type="nucleotide sequence ID" value="NC_005019.1"/>
</dbReference>
<dbReference type="RefSeq" id="WP_000165985.1">
    <property type="nucleotide sequence ID" value="NZ_WXZA01000059.1"/>
</dbReference>
<dbReference type="RefSeq" id="YP_006940171.1">
    <property type="nucleotide sequence ID" value="NC_018997.1"/>
</dbReference>
<dbReference type="RefSeq" id="YP_006953570.1">
    <property type="nucleotide sequence ID" value="NC_019076.1"/>
</dbReference>
<dbReference type="RefSeq" id="YP_007316613.1">
    <property type="nucleotide sequence ID" value="NC_019982.1"/>
</dbReference>
<dbReference type="RefSeq" id="YP_009071085.1">
    <property type="nucleotide sequence ID" value="NC_025178.1"/>
</dbReference>
<dbReference type="RefSeq" id="YP_794132.1">
    <property type="nucleotide sequence ID" value="NC_008488.1"/>
</dbReference>
<dbReference type="PDB" id="1B6Q">
    <property type="method" value="X-ray"/>
    <property type="resolution" value="1.80 A"/>
    <property type="chains" value="A=1-63"/>
</dbReference>
<dbReference type="PDB" id="1F4M">
    <property type="method" value="X-ray"/>
    <property type="resolution" value="2.25 A"/>
    <property type="chains" value="A/B/C/D/E/F=1-63"/>
</dbReference>
<dbReference type="PDB" id="1F4N">
    <property type="method" value="X-ray"/>
    <property type="resolution" value="1.90 A"/>
    <property type="chains" value="A/B=1-63"/>
</dbReference>
<dbReference type="PDB" id="1GMG">
    <property type="method" value="X-ray"/>
    <property type="resolution" value="1.90 A"/>
    <property type="chains" value="A/B=1-63"/>
</dbReference>
<dbReference type="PDB" id="1GTO">
    <property type="method" value="X-ray"/>
    <property type="resolution" value="1.82 A"/>
    <property type="chains" value="A/B/C=2-62"/>
</dbReference>
<dbReference type="PDB" id="1NKD">
    <property type="method" value="X-ray"/>
    <property type="resolution" value="1.09 A"/>
    <property type="chains" value="A=1-63"/>
</dbReference>
<dbReference type="PDB" id="1QX8">
    <property type="method" value="X-ray"/>
    <property type="resolution" value="2.02 A"/>
    <property type="chains" value="A/B=1-63"/>
</dbReference>
<dbReference type="PDB" id="1ROP">
    <property type="method" value="X-ray"/>
    <property type="resolution" value="1.70 A"/>
    <property type="chains" value="A=1-63"/>
</dbReference>
<dbReference type="PDB" id="1RPO">
    <property type="method" value="X-ray"/>
    <property type="resolution" value="1.40 A"/>
    <property type="chains" value="A=1-63"/>
</dbReference>
<dbReference type="PDB" id="1RPR">
    <property type="method" value="NMR"/>
    <property type="chains" value="A/B=1-63"/>
</dbReference>
<dbReference type="PDB" id="1YO7">
    <property type="method" value="X-ray"/>
    <property type="resolution" value="2.80 A"/>
    <property type="chains" value="A/B=1-63"/>
</dbReference>
<dbReference type="PDB" id="2GHY">
    <property type="method" value="X-ray"/>
    <property type="resolution" value="2.50 A"/>
    <property type="chains" value="A/B=1-63"/>
</dbReference>
<dbReference type="PDB" id="2IJH">
    <property type="method" value="X-ray"/>
    <property type="resolution" value="1.80 A"/>
    <property type="chains" value="A/B/C=1-63"/>
</dbReference>
<dbReference type="PDB" id="2IJI">
    <property type="method" value="X-ray"/>
    <property type="resolution" value="2.30 A"/>
    <property type="chains" value="A=1-63"/>
</dbReference>
<dbReference type="PDB" id="2IJJ">
    <property type="method" value="X-ray"/>
    <property type="resolution" value="1.90 A"/>
    <property type="chains" value="A/B/C=1-63"/>
</dbReference>
<dbReference type="PDB" id="2IJK">
    <property type="method" value="X-ray"/>
    <property type="resolution" value="1.55 A"/>
    <property type="chains" value="A/B=1-63"/>
</dbReference>
<dbReference type="PDB" id="3K79">
    <property type="method" value="X-ray"/>
    <property type="resolution" value="1.96 A"/>
    <property type="chains" value="A=2-63"/>
</dbReference>
<dbReference type="PDB" id="4DO2">
    <property type="method" value="X-ray"/>
    <property type="resolution" value="1.40 A"/>
    <property type="chains" value="A/B=1-63"/>
</dbReference>
<dbReference type="PDB" id="7KAE">
    <property type="method" value="X-ray"/>
    <property type="resolution" value="1.60 A"/>
    <property type="chains" value="A/B=2-57"/>
</dbReference>
<dbReference type="PDBsum" id="1B6Q"/>
<dbReference type="PDBsum" id="1F4M"/>
<dbReference type="PDBsum" id="1F4N"/>
<dbReference type="PDBsum" id="1GMG"/>
<dbReference type="PDBsum" id="1GTO"/>
<dbReference type="PDBsum" id="1NKD"/>
<dbReference type="PDBsum" id="1QX8"/>
<dbReference type="PDBsum" id="1ROP"/>
<dbReference type="PDBsum" id="1RPO"/>
<dbReference type="PDBsum" id="1RPR"/>
<dbReference type="PDBsum" id="1YO7"/>
<dbReference type="PDBsum" id="2GHY"/>
<dbReference type="PDBsum" id="2IJH"/>
<dbReference type="PDBsum" id="2IJI"/>
<dbReference type="PDBsum" id="2IJJ"/>
<dbReference type="PDBsum" id="2IJK"/>
<dbReference type="PDBsum" id="3K79"/>
<dbReference type="PDBsum" id="4DO2"/>
<dbReference type="PDBsum" id="7KAE"/>
<dbReference type="BMRB" id="P03051"/>
<dbReference type="SMR" id="P03051"/>
<dbReference type="DIP" id="DIP-48900N"/>
<dbReference type="OMA" id="NMAKFIR"/>
<dbReference type="OrthoDB" id="6402495at2"/>
<dbReference type="EvolutionaryTrace" id="P03051"/>
<dbReference type="GO" id="GO:0042802">
    <property type="term" value="F:identical protein binding"/>
    <property type="evidence" value="ECO:0000353"/>
    <property type="project" value="IntAct"/>
</dbReference>
<dbReference type="FunFam" id="1.10.287.230:FF:000002">
    <property type="entry name" value="Regulatory protein rop, putative"/>
    <property type="match status" value="1"/>
</dbReference>
<dbReference type="Gene3D" id="1.10.287.230">
    <property type="match status" value="1"/>
</dbReference>
<dbReference type="InterPro" id="IPR000769">
    <property type="entry name" value="Regulatory_Rop"/>
</dbReference>
<dbReference type="InterPro" id="IPR035962">
    <property type="entry name" value="Rop-like_sf"/>
</dbReference>
<dbReference type="Pfam" id="PF01815">
    <property type="entry name" value="Rop"/>
    <property type="match status" value="1"/>
</dbReference>
<dbReference type="PIRSF" id="PIRSF003229">
    <property type="entry name" value="Rop_reg"/>
    <property type="match status" value="1"/>
</dbReference>
<dbReference type="PRINTS" id="PR00835">
    <property type="entry name" value="ROPREGULATRY"/>
</dbReference>
<dbReference type="SUPFAM" id="SSF47380">
    <property type="entry name" value="ROP protein"/>
    <property type="match status" value="1"/>
</dbReference>
<reference key="1">
    <citation type="journal article" date="1982" name="Proc. Natl. Acad. Sci. U.S.A.">
        <title>Control of ColE1 DNA replication: the rop gene product negatively affects transcription from the replication primer promoter.</title>
        <authorList>
            <person name="Cesareni G."/>
            <person name="Muesing M.A."/>
            <person name="Polisky B."/>
        </authorList>
    </citation>
    <scope>NUCLEOTIDE SEQUENCE [GENOMIC DNA]</scope>
    <source>
        <plasmid>ColE1</plasmid>
    </source>
</reference>
<reference key="2">
    <citation type="journal article" date="1983" name="Proc. Natl. Acad. Sci. U.S.A.">
        <title>Regulatory regions of ColE1 that are involved in determination of plasmid copy number.</title>
        <authorList>
            <person name="Som T."/>
            <person name="Tomizawa J."/>
        </authorList>
    </citation>
    <scope>NUCLEOTIDE SEQUENCE [GENOMIC DNA]</scope>
    <source>
        <plasmid>ColE1</plasmid>
    </source>
</reference>
<reference key="3">
    <citation type="journal article" date="1979" name="Cold Spring Harb. Symp. Quant. Biol.">
        <title>Complete nucleotide sequence of the Escherichia coli plasmid pBR322.</title>
        <authorList>
            <person name="Sutcliffe J.G."/>
        </authorList>
    </citation>
    <scope>NUCLEOTIDE SEQUENCE [GENOMIC DNA]</scope>
    <source>
        <plasmid>pMB1</plasmid>
    </source>
</reference>
<reference key="4">
    <citation type="journal article" date="1990" name="Biochemistry">
        <title>Proton nuclear magnetic resonance assignments and secondary structure determination of the ColE1 rop (rom) protein.</title>
        <authorList>
            <person name="Eberle W."/>
            <person name="Klaus W."/>
            <person name="Cesarini G."/>
            <person name="Sander C."/>
            <person name="Roesch P."/>
        </authorList>
    </citation>
    <scope>STRUCTURE BY NMR</scope>
</reference>
<reference key="5">
    <citation type="journal article" date="1987" name="J. Mol. Biol.">
        <title>Structure of the ColE1 rop protein at 1.7-A resolution.</title>
        <authorList>
            <person name="Banner D.W."/>
            <person name="Kokkinidis M."/>
            <person name="Tsernoglou D."/>
        </authorList>
    </citation>
    <scope>X-RAY CRYSTALLOGRAPHY (1.7 ANGSTROMS)</scope>
</reference>
<reference key="6">
    <citation type="journal article" date="1996" name="Nat. Struct. Biol.">
        <title>Amino-acid substitutions in a surface turn modulate protein stability.</title>
        <authorList>
            <person name="Predki P.F."/>
            <person name="Agrawal V."/>
            <person name="Brunger A.T."/>
            <person name="Regan L."/>
        </authorList>
    </citation>
    <scope>X-RAY CRYSTALLOGRAPHY (1.82 ANGSTROMS)</scope>
</reference>
<reference key="7">
    <citation type="journal article" date="1998" name="Acta Crystallogr. D">
        <title>Structural parameters for proteins derived from the atomic resolution (1.09-A) structure of a designed variant of the ColE1 ROP protein.</title>
        <authorList>
            <person name="Vlassi M."/>
            <person name="Dauter Z."/>
            <person name="Wilson K.S."/>
            <person name="Kokkinidis M."/>
        </authorList>
    </citation>
    <scope>X-RAY CRYSTALLOGRAPHY (1.07 ANGSTROMS)</scope>
</reference>
<reference key="8">
    <citation type="journal article" date="1991" name="J. Biomol. NMR">
        <title>The structure of ColE1 rop in solution.</title>
        <authorList>
            <person name="Eberle W."/>
            <person name="Pastore A."/>
            <person name="Sander C."/>
            <person name="Rosch P."/>
        </authorList>
    </citation>
    <scope>STRUCTURE BY NMR</scope>
</reference>
<evidence type="ECO:0007829" key="1">
    <source>
        <dbReference type="PDB" id="1NKD"/>
    </source>
</evidence>
<protein>
    <recommendedName>
        <fullName>Regulatory protein rop</fullName>
    </recommendedName>
    <alternativeName>
        <fullName>RNA one modulator</fullName>
        <shortName>ROM</shortName>
    </alternativeName>
</protein>
<gene>
    <name type="primary">rop</name>
</gene>
<comment type="function">
    <text>Regulates plasmid DNA replication by modulating the initiation of transcription of the primer RNA precursor. Processing of the precursor of the primer, RNAII, is inhibited by hydrogen bonding of RNAII to its complementary sequence in RNAI. ROP increases the affinity of RNAI for RNAII and thus decreases the rate of replication initiation events.</text>
</comment>
<comment type="subunit">
    <text>Antiparallel homodimer.</text>
</comment>
<comment type="interaction">
    <interactant intactId="EBI-15786748">
        <id>P03051</id>
    </interactant>
    <interactant intactId="EBI-15786748">
        <id>P03051</id>
        <label>rop</label>
    </interactant>
    <organismsDiffer>false</organismsDiffer>
    <experiments>2</experiments>
</comment>
<geneLocation type="plasmid">
    <name>ColE1</name>
</geneLocation>
<geneLocation type="plasmid">
    <name>pMB1</name>
</geneLocation>
<organism>
    <name type="scientific">Escherichia coli</name>
    <dbReference type="NCBI Taxonomy" id="562"/>
    <lineage>
        <taxon>Bacteria</taxon>
        <taxon>Pseudomonadati</taxon>
        <taxon>Pseudomonadota</taxon>
        <taxon>Gammaproteobacteria</taxon>
        <taxon>Enterobacterales</taxon>
        <taxon>Enterobacteriaceae</taxon>
        <taxon>Escherichia</taxon>
    </lineage>
</organism>